<dbReference type="EMBL" id="X52094">
    <property type="protein sequence ID" value="CAA36313.1"/>
    <property type="molecule type" value="Genomic_DNA"/>
</dbReference>
<dbReference type="EMBL" id="AE006468">
    <property type="protein sequence ID" value="AAL20108.1"/>
    <property type="molecule type" value="Genomic_DNA"/>
</dbReference>
<dbReference type="EMBL" id="X51737">
    <property type="protein sequence ID" value="CAA36023.1"/>
    <property type="molecule type" value="Genomic_DNA"/>
</dbReference>
<dbReference type="PIR" id="S08173">
    <property type="entry name" value="XMEBFF"/>
</dbReference>
<dbReference type="RefSeq" id="NP_460149.1">
    <property type="nucleotide sequence ID" value="NC_003197.2"/>
</dbReference>
<dbReference type="RefSeq" id="WP_000349278.1">
    <property type="nucleotide sequence ID" value="NC_003197.2"/>
</dbReference>
<dbReference type="PDB" id="7BIN">
    <property type="method" value="EM"/>
    <property type="resolution" value="3.20 A"/>
    <property type="chains" value="b/c/d/e/f=1-251"/>
</dbReference>
<dbReference type="PDB" id="7CBM">
    <property type="method" value="EM"/>
    <property type="resolution" value="3.20 A"/>
    <property type="chains" value="a/b/c/d/e=1-251"/>
</dbReference>
<dbReference type="PDB" id="7CGO">
    <property type="method" value="EM"/>
    <property type="resolution" value="3.90 A"/>
    <property type="chains" value="a/b/c/d/e=1-251"/>
</dbReference>
<dbReference type="PDB" id="7E80">
    <property type="method" value="EM"/>
    <property type="resolution" value="3.67 A"/>
    <property type="chains" value="a/b/c/d/e=1-251"/>
</dbReference>
<dbReference type="PDB" id="7E82">
    <property type="method" value="EM"/>
    <property type="resolution" value="3.30 A"/>
    <property type="chains" value="a/b/c/d/e=1-251"/>
</dbReference>
<dbReference type="PDB" id="8WK3">
    <property type="method" value="EM"/>
    <property type="resolution" value="3.30 A"/>
    <property type="chains" value="m/n/o/p/q=1-251"/>
</dbReference>
<dbReference type="PDB" id="8WKK">
    <property type="method" value="EM"/>
    <property type="resolution" value="3.30 A"/>
    <property type="chains" value="m/n/o/p/q=1-251"/>
</dbReference>
<dbReference type="PDB" id="8WL2">
    <property type="method" value="EM"/>
    <property type="resolution" value="3.40 A"/>
    <property type="chains" value="AA/AB/AC/AD/AE=1-251"/>
</dbReference>
<dbReference type="PDB" id="8WLH">
    <property type="method" value="EM"/>
    <property type="resolution" value="3.70 A"/>
    <property type="chains" value="m/n/o/p/q=1-251"/>
</dbReference>
<dbReference type="PDB" id="8WLQ">
    <property type="method" value="EM"/>
    <property type="resolution" value="3.80 A"/>
    <property type="chains" value="m/n/o/p/q=1-251"/>
</dbReference>
<dbReference type="PDB" id="8WLT">
    <property type="method" value="EM"/>
    <property type="resolution" value="4.10 A"/>
    <property type="chains" value="AA/AB/AC/AD/AE=1-251"/>
</dbReference>
<dbReference type="PDB" id="8WO5">
    <property type="method" value="EM"/>
    <property type="resolution" value="7.40 A"/>
    <property type="chains" value="AA/AB/AC/AD/AE=1-251"/>
</dbReference>
<dbReference type="PDB" id="8WOE">
    <property type="method" value="EM"/>
    <property type="resolution" value="4.30 A"/>
    <property type="chains" value="AA/AB/AC/AD/AE=1-251"/>
</dbReference>
<dbReference type="PDBsum" id="7BIN"/>
<dbReference type="PDBsum" id="7CBM"/>
<dbReference type="PDBsum" id="7CGO"/>
<dbReference type="PDBsum" id="7E80"/>
<dbReference type="PDBsum" id="7E82"/>
<dbReference type="PDBsum" id="8WK3"/>
<dbReference type="PDBsum" id="8WKK"/>
<dbReference type="PDBsum" id="8WL2"/>
<dbReference type="PDBsum" id="8WLH"/>
<dbReference type="PDBsum" id="8WLQ"/>
<dbReference type="PDBsum" id="8WLT"/>
<dbReference type="PDBsum" id="8WO5"/>
<dbReference type="PDBsum" id="8WOE"/>
<dbReference type="EMDB" id="EMD-12192"/>
<dbReference type="EMDB" id="EMD-30336"/>
<dbReference type="EMDB" id="EMD-30359"/>
<dbReference type="EMDB" id="EMD-31006"/>
<dbReference type="EMDB" id="EMD-31008"/>
<dbReference type="EMDB" id="EMD-37594"/>
<dbReference type="EMDB" id="EMD-37601"/>
<dbReference type="EMDB" id="EMD-37611"/>
<dbReference type="EMDB" id="EMD-37619"/>
<dbReference type="EMDB" id="EMD-37628"/>
<dbReference type="EMDB" id="EMD-37630"/>
<dbReference type="EMDB" id="EMD-37679"/>
<dbReference type="EMDB" id="EMD-37684"/>
<dbReference type="SMR" id="P16323"/>
<dbReference type="STRING" id="99287.STM1178"/>
<dbReference type="PaxDb" id="99287-STM1178"/>
<dbReference type="DNASU" id="1252696"/>
<dbReference type="GeneID" id="1252696"/>
<dbReference type="KEGG" id="stm:STM1178"/>
<dbReference type="PATRIC" id="fig|99287.12.peg.1246"/>
<dbReference type="HOGENOM" id="CLU_013687_1_0_6"/>
<dbReference type="OMA" id="HQDDMNA"/>
<dbReference type="PhylomeDB" id="P16323"/>
<dbReference type="BioCyc" id="SENT99287:STM1178-MONOMER"/>
<dbReference type="Proteomes" id="UP000001014">
    <property type="component" value="Chromosome"/>
</dbReference>
<dbReference type="GO" id="GO:0009288">
    <property type="term" value="C:bacterial-type flagellum"/>
    <property type="evidence" value="ECO:0000318"/>
    <property type="project" value="GO_Central"/>
</dbReference>
<dbReference type="GO" id="GO:0009425">
    <property type="term" value="C:bacterial-type flagellum basal body"/>
    <property type="evidence" value="ECO:0007669"/>
    <property type="project" value="UniProtKB-SubCell"/>
</dbReference>
<dbReference type="GO" id="GO:0071978">
    <property type="term" value="P:bacterial-type flagellum-dependent swarming motility"/>
    <property type="evidence" value="ECO:0000318"/>
    <property type="project" value="GO_Central"/>
</dbReference>
<dbReference type="InterPro" id="IPR001444">
    <property type="entry name" value="Flag_bb_rod_N"/>
</dbReference>
<dbReference type="InterPro" id="IPR019776">
    <property type="entry name" value="Flagellar_basal_body_rod_CS"/>
</dbReference>
<dbReference type="InterPro" id="IPR020013">
    <property type="entry name" value="Flagellar_FlgE/F/G"/>
</dbReference>
<dbReference type="InterPro" id="IPR010930">
    <property type="entry name" value="Flg_bb/hook_C_dom"/>
</dbReference>
<dbReference type="InterPro" id="IPR037925">
    <property type="entry name" value="FlgE/F/G-like"/>
</dbReference>
<dbReference type="InterPro" id="IPR053967">
    <property type="entry name" value="LlgE_F_G-like_D1"/>
</dbReference>
<dbReference type="NCBIfam" id="TIGR03506">
    <property type="entry name" value="FlgEFG_subfam"/>
    <property type="match status" value="1"/>
</dbReference>
<dbReference type="NCBIfam" id="NF009280">
    <property type="entry name" value="PRK12640.1"/>
    <property type="match status" value="1"/>
</dbReference>
<dbReference type="PANTHER" id="PTHR30435:SF18">
    <property type="entry name" value="FLAGELLAR BASAL-BODY ROD PROTEIN FLGF"/>
    <property type="match status" value="1"/>
</dbReference>
<dbReference type="PANTHER" id="PTHR30435">
    <property type="entry name" value="FLAGELLAR PROTEIN"/>
    <property type="match status" value="1"/>
</dbReference>
<dbReference type="Pfam" id="PF00460">
    <property type="entry name" value="Flg_bb_rod"/>
    <property type="match status" value="1"/>
</dbReference>
<dbReference type="Pfam" id="PF06429">
    <property type="entry name" value="Flg_bbr_C"/>
    <property type="match status" value="1"/>
</dbReference>
<dbReference type="Pfam" id="PF22692">
    <property type="entry name" value="LlgE_F_G_D1"/>
    <property type="match status" value="1"/>
</dbReference>
<dbReference type="SUPFAM" id="SSF117143">
    <property type="entry name" value="Flagellar hook protein flgE"/>
    <property type="match status" value="1"/>
</dbReference>
<dbReference type="PROSITE" id="PS00588">
    <property type="entry name" value="FLAGELLA_BB_ROD"/>
    <property type="match status" value="1"/>
</dbReference>
<reference key="1">
    <citation type="journal article" date="1990" name="J. Mol. Biol.">
        <title>FlgB, FlgC, FlgF and FlgG. A family of structurally related proteins in the flagellar basal body of Salmonella typhimurium.</title>
        <authorList>
            <person name="Homma M."/>
            <person name="Kutsukake K."/>
            <person name="Hasebe M."/>
            <person name="Iino T."/>
            <person name="Macnab R.M."/>
        </authorList>
    </citation>
    <scope>NUCLEOTIDE SEQUENCE [GENOMIC DNA]</scope>
</reference>
<reference key="2">
    <citation type="journal article" date="2001" name="Nature">
        <title>Complete genome sequence of Salmonella enterica serovar Typhimurium LT2.</title>
        <authorList>
            <person name="McClelland M."/>
            <person name="Sanderson K.E."/>
            <person name="Spieth J."/>
            <person name="Clifton S.W."/>
            <person name="Latreille P."/>
            <person name="Courtney L."/>
            <person name="Porwollik S."/>
            <person name="Ali J."/>
            <person name="Dante M."/>
            <person name="Du F."/>
            <person name="Hou S."/>
            <person name="Layman D."/>
            <person name="Leonard S."/>
            <person name="Nguyen C."/>
            <person name="Scott K."/>
            <person name="Holmes A."/>
            <person name="Grewal N."/>
            <person name="Mulvaney E."/>
            <person name="Ryan E."/>
            <person name="Sun H."/>
            <person name="Florea L."/>
            <person name="Miller W."/>
            <person name="Stoneking T."/>
            <person name="Nhan M."/>
            <person name="Waterston R."/>
            <person name="Wilson R.K."/>
        </authorList>
    </citation>
    <scope>NUCLEOTIDE SEQUENCE [LARGE SCALE GENOMIC DNA]</scope>
    <source>
        <strain>LT2 / SGSC1412 / ATCC 700720</strain>
    </source>
</reference>
<reference key="3">
    <citation type="journal article" date="1990" name="J. Mol. Biol.">
        <title>Flagellar hook and hook-associated proteins of Salmonella typhimurium and their relationship to other axial components of the flagellum.</title>
        <authorList>
            <person name="Homma M."/>
            <person name="Derosier D.J."/>
            <person name="Macnab R.M."/>
        </authorList>
    </citation>
    <scope>NUCLEOTIDE SEQUENCE [GENOMIC DNA] OF 1-9</scope>
</reference>
<reference key="4">
    <citation type="journal article" date="1990" name="J. Mol. Biol.">
        <title>Stoichiometric analysis of the flagellar hook-(basal-body) complex of Salmonella typhimurium.</title>
        <authorList>
            <person name="Jones C.J."/>
            <person name="Macnab R.M."/>
            <person name="Okino H."/>
            <person name="Aizawa S."/>
        </authorList>
    </citation>
    <scope>PROTEIN SEQUENCE OF 1-5</scope>
</reference>
<evidence type="ECO:0000305" key="1"/>
<evidence type="ECO:0007829" key="2">
    <source>
        <dbReference type="PDB" id="7BIN"/>
    </source>
</evidence>
<gene>
    <name type="primary">flgF</name>
    <name type="synonym">fla FVI</name>
    <name type="synonym">flaX</name>
    <name type="ordered locus">STM1178</name>
</gene>
<comment type="subunit">
    <text>The basal body constitutes a major portion of the flagellar organelle and consists of five rings (E,L,P,S, and M) mounted on a central rod. The rod consists of about 26 subunits of FlgG in the distal portion, and FlgB, FlgC and FlgF are thought to build up the proximal portion of the rod with about 6 subunits each.</text>
</comment>
<comment type="subcellular location">
    <subcellularLocation>
        <location>Bacterial flagellum basal body</location>
    </subcellularLocation>
</comment>
<comment type="similarity">
    <text evidence="1">Belongs to the flagella basal body rod proteins family.</text>
</comment>
<name>FLGF_SALTY</name>
<keyword id="KW-0002">3D-structure</keyword>
<keyword id="KW-0975">Bacterial flagellum</keyword>
<keyword id="KW-0903">Direct protein sequencing</keyword>
<keyword id="KW-1185">Reference proteome</keyword>
<accession>P16323</accession>
<sequence length="251" mass="26102">MDHAIYTAMGAASQTLNQQAVTASNLANASTPGFRAQLNALRAVPVDGLSLATRTLVTASTPGADMTPGQLDYTSRPLDVALQQDGWLVVQAADGAEGYTRNGNIQVGPTGQLTIQGHPVIGEGGPITVPEGSEITIAADGTISALNPGDPPNTVAPVGRLKLVKAEGNEVQRSDDGLFRLTAEAQAERGAVLAADPSIRIMSGVLEGSNVKPVEAMTDMIANARRFEMQMKVITSVDENEGRANQLLSMS</sequence>
<feature type="chain" id="PRO_0000180839" description="Flagellar basal-body rod protein FlgF">
    <location>
        <begin position="1"/>
        <end position="251"/>
    </location>
</feature>
<feature type="helix" evidence="2">
    <location>
        <begin position="4"/>
        <end position="27"/>
    </location>
</feature>
<feature type="turn" evidence="2">
    <location>
        <begin position="28"/>
        <end position="30"/>
    </location>
</feature>
<feature type="strand" evidence="2">
    <location>
        <begin position="40"/>
        <end position="45"/>
    </location>
</feature>
<feature type="strand" evidence="2">
    <location>
        <begin position="55"/>
        <end position="61"/>
    </location>
</feature>
<feature type="strand" evidence="2">
    <location>
        <begin position="71"/>
        <end position="73"/>
    </location>
</feature>
<feature type="strand" evidence="2">
    <location>
        <begin position="79"/>
        <end position="82"/>
    </location>
</feature>
<feature type="strand" evidence="2">
    <location>
        <begin position="86"/>
        <end position="91"/>
    </location>
</feature>
<feature type="strand" evidence="2">
    <location>
        <begin position="93"/>
        <end position="100"/>
    </location>
</feature>
<feature type="strand" evidence="2">
    <location>
        <begin position="115"/>
        <end position="118"/>
    </location>
</feature>
<feature type="strand" evidence="2">
    <location>
        <begin position="123"/>
        <end position="126"/>
    </location>
</feature>
<feature type="strand" evidence="2">
    <location>
        <begin position="135"/>
        <end position="137"/>
    </location>
</feature>
<feature type="strand" evidence="2">
    <location>
        <begin position="139"/>
        <end position="145"/>
    </location>
</feature>
<feature type="strand" evidence="2">
    <location>
        <begin position="157"/>
        <end position="160"/>
    </location>
</feature>
<feature type="strand" evidence="2">
    <location>
        <begin position="163"/>
        <end position="165"/>
    </location>
</feature>
<feature type="helix" evidence="2">
    <location>
        <begin position="168"/>
        <end position="170"/>
    </location>
</feature>
<feature type="strand" evidence="2">
    <location>
        <begin position="175"/>
        <end position="177"/>
    </location>
</feature>
<feature type="strand" evidence="2">
    <location>
        <begin position="183"/>
        <end position="189"/>
    </location>
</feature>
<feature type="strand" evidence="2">
    <location>
        <begin position="201"/>
        <end position="203"/>
    </location>
</feature>
<feature type="strand" evidence="2">
    <location>
        <begin position="205"/>
        <end position="207"/>
    </location>
</feature>
<feature type="helix" evidence="2">
    <location>
        <begin position="213"/>
        <end position="244"/>
    </location>
</feature>
<feature type="helix" evidence="2">
    <location>
        <begin position="245"/>
        <end position="247"/>
    </location>
</feature>
<organism>
    <name type="scientific">Salmonella typhimurium (strain LT2 / SGSC1412 / ATCC 700720)</name>
    <dbReference type="NCBI Taxonomy" id="99287"/>
    <lineage>
        <taxon>Bacteria</taxon>
        <taxon>Pseudomonadati</taxon>
        <taxon>Pseudomonadota</taxon>
        <taxon>Gammaproteobacteria</taxon>
        <taxon>Enterobacterales</taxon>
        <taxon>Enterobacteriaceae</taxon>
        <taxon>Salmonella</taxon>
    </lineage>
</organism>
<protein>
    <recommendedName>
        <fullName>Flagellar basal-body rod protein FlgF</fullName>
    </recommendedName>
    <alternativeName>
        <fullName>Putative proximal rod protein</fullName>
    </alternativeName>
</protein>
<proteinExistence type="evidence at protein level"/>